<proteinExistence type="predicted"/>
<organism>
    <name type="scientific">Methanocaldococcus jannaschii (strain ATCC 43067 / DSM 2661 / JAL-1 / JCM 10045 / NBRC 100440)</name>
    <name type="common">Methanococcus jannaschii</name>
    <dbReference type="NCBI Taxonomy" id="243232"/>
    <lineage>
        <taxon>Archaea</taxon>
        <taxon>Methanobacteriati</taxon>
        <taxon>Methanobacteriota</taxon>
        <taxon>Methanomada group</taxon>
        <taxon>Methanococci</taxon>
        <taxon>Methanococcales</taxon>
        <taxon>Methanocaldococcaceae</taxon>
        <taxon>Methanocaldococcus</taxon>
    </lineage>
</organism>
<feature type="chain" id="PRO_0000107338" description="Uncharacterized protein MJ1451">
    <location>
        <begin position="1"/>
        <end position="484"/>
    </location>
</feature>
<evidence type="ECO:0000305" key="1"/>
<reference key="1">
    <citation type="journal article" date="1996" name="Science">
        <title>Complete genome sequence of the methanogenic archaeon, Methanococcus jannaschii.</title>
        <authorList>
            <person name="Bult C.J."/>
            <person name="White O."/>
            <person name="Olsen G.J."/>
            <person name="Zhou L."/>
            <person name="Fleischmann R.D."/>
            <person name="Sutton G.G."/>
            <person name="Blake J.A."/>
            <person name="FitzGerald L.M."/>
            <person name="Clayton R.A."/>
            <person name="Gocayne J.D."/>
            <person name="Kerlavage A.R."/>
            <person name="Dougherty B.A."/>
            <person name="Tomb J.-F."/>
            <person name="Adams M.D."/>
            <person name="Reich C.I."/>
            <person name="Overbeek R."/>
            <person name="Kirkness E.F."/>
            <person name="Weinstock K.G."/>
            <person name="Merrick J.M."/>
            <person name="Glodek A."/>
            <person name="Scott J.L."/>
            <person name="Geoghagen N.S.M."/>
            <person name="Weidman J.F."/>
            <person name="Fuhrmann J.L."/>
            <person name="Nguyen D."/>
            <person name="Utterback T.R."/>
            <person name="Kelley J.M."/>
            <person name="Peterson J.D."/>
            <person name="Sadow P.W."/>
            <person name="Hanna M.C."/>
            <person name="Cotton M.D."/>
            <person name="Roberts K.M."/>
            <person name="Hurst M.A."/>
            <person name="Kaine B.P."/>
            <person name="Borodovsky M."/>
            <person name="Klenk H.-P."/>
            <person name="Fraser C.M."/>
            <person name="Smith H.O."/>
            <person name="Woese C.R."/>
            <person name="Venter J.C."/>
        </authorList>
    </citation>
    <scope>NUCLEOTIDE SEQUENCE [LARGE SCALE GENOMIC DNA]</scope>
    <source>
        <strain>ATCC 43067 / DSM 2661 / JAL-1 / JCM 10045 / NBRC 100440</strain>
    </source>
</reference>
<name>Y1451_METJA</name>
<keyword id="KW-1185">Reference proteome</keyword>
<dbReference type="EMBL" id="L77117">
    <property type="protein sequence ID" value="AAB99462.1"/>
    <property type="molecule type" value="Genomic_DNA"/>
</dbReference>
<dbReference type="PIR" id="B64481">
    <property type="entry name" value="B64481"/>
</dbReference>
<dbReference type="RefSeq" id="WP_010870971.1">
    <property type="nucleotide sequence ID" value="NC_000909.1"/>
</dbReference>
<dbReference type="STRING" id="243232.MJ_1451"/>
<dbReference type="PaxDb" id="243232-MJ_1451"/>
<dbReference type="EnsemblBacteria" id="AAB99462">
    <property type="protein sequence ID" value="AAB99462"/>
    <property type="gene ID" value="MJ_1451"/>
</dbReference>
<dbReference type="GeneID" id="1452355"/>
<dbReference type="KEGG" id="mja:MJ_1451"/>
<dbReference type="eggNOG" id="arCOG04866">
    <property type="taxonomic scope" value="Archaea"/>
</dbReference>
<dbReference type="HOGENOM" id="CLU_541447_0_0_2"/>
<dbReference type="InParanoid" id="Q58846"/>
<dbReference type="OrthoDB" id="114017at2157"/>
<dbReference type="PhylomeDB" id="Q58846"/>
<dbReference type="Proteomes" id="UP000000805">
    <property type="component" value="Chromosome"/>
</dbReference>
<dbReference type="InterPro" id="IPR008303">
    <property type="entry name" value="Methan_mark_14"/>
</dbReference>
<dbReference type="NCBIfam" id="TIGR03285">
    <property type="entry name" value="methan_mark_14"/>
    <property type="match status" value="1"/>
</dbReference>
<dbReference type="Pfam" id="PF09887">
    <property type="entry name" value="DUF2114"/>
    <property type="match status" value="1"/>
</dbReference>
<dbReference type="PIRSF" id="PIRSF016937">
    <property type="entry name" value="UCP016937"/>
    <property type="match status" value="1"/>
</dbReference>
<protein>
    <recommendedName>
        <fullName>Uncharacterized protein MJ1451</fullName>
    </recommendedName>
</protein>
<sequence>MGIFDVISGLFKKKPKIAYAKSQSVDLIELKRNPYYIVASVELGNTTTKSIITATNMDTGKTYIVSKHVKMTRDVRKPKKGEEVFGETLWGVELTREAVADMVKEVLLESLKKAGLTVDDLHFVVRSTGVTAGFASPEEVGEMIIALAQGCMKAGVPPAKMTPAMTKEQIPKPFDKYSFLDKIIFDGAVTGVLPPTGKEVVANEMEGELVTAGIKVGSKWTDVDFRNPCMSIDFGTTLAGRITNDTLPYAKVIGNLCGLAGAIADAIARGSGKIDEKTGAALDLANIKGKPNEELAKEYAEEMHKYIIIKEVPKDVDRFGTVPVDPKSAEKAGTTLIGCDVGKNGSDLIKLEELGRELVEKSDIPTLMCCLDYVMSEVVRRLVELAYKKGLISEKSAVGITGRAGITGRKPELIIEKLKTLEIWDKVEENVVFVEDGLALGASVMARCMNCLGTPQVPIGGVRGGGCILGLRRKWQKERGMIRD</sequence>
<gene>
    <name type="ordered locus">MJ1451</name>
</gene>
<accession>Q58846</accession>
<comment type="similarity">
    <text evidence="1">To M.thermoautotrophicum MTH1153.</text>
</comment>